<accession>B3DR08</accession>
<evidence type="ECO:0000255" key="1">
    <source>
        <dbReference type="HAMAP-Rule" id="MF_01161"/>
    </source>
</evidence>
<organism>
    <name type="scientific">Bifidobacterium longum (strain DJO10A)</name>
    <dbReference type="NCBI Taxonomy" id="205913"/>
    <lineage>
        <taxon>Bacteria</taxon>
        <taxon>Bacillati</taxon>
        <taxon>Actinomycetota</taxon>
        <taxon>Actinomycetes</taxon>
        <taxon>Bifidobacteriales</taxon>
        <taxon>Bifidobacteriaceae</taxon>
        <taxon>Bifidobacterium</taxon>
    </lineage>
</organism>
<reference key="1">
    <citation type="journal article" date="2008" name="BMC Genomics">
        <title>Comparative genomic analysis of the gut bacterium Bifidobacterium longum reveals loci susceptible to deletion during pure culture growth.</title>
        <authorList>
            <person name="Lee J.H."/>
            <person name="Karamychev V.N."/>
            <person name="Kozyavkin S.A."/>
            <person name="Mills D."/>
            <person name="Pavlov A.R."/>
            <person name="Pavlova N.V."/>
            <person name="Polouchine N.N."/>
            <person name="Richardson P.M."/>
            <person name="Shakhova V.V."/>
            <person name="Slesarev A.I."/>
            <person name="Weimer B."/>
            <person name="O'Sullivan D.J."/>
        </authorList>
    </citation>
    <scope>NUCLEOTIDE SEQUENCE [LARGE SCALE GENOMIC DNA]</scope>
    <source>
        <strain>DJO10A</strain>
    </source>
</reference>
<name>TILS_BIFLD</name>
<feature type="chain" id="PRO_1000137864" description="tRNA(Ile)-lysidine synthase">
    <location>
        <begin position="1"/>
        <end position="388"/>
    </location>
</feature>
<feature type="binding site" evidence="1">
    <location>
        <begin position="51"/>
        <end position="56"/>
    </location>
    <ligand>
        <name>ATP</name>
        <dbReference type="ChEBI" id="CHEBI:30616"/>
    </ligand>
</feature>
<dbReference type="EC" id="6.3.4.19" evidence="1"/>
<dbReference type="EMBL" id="CP000605">
    <property type="protein sequence ID" value="ACD99291.1"/>
    <property type="molecule type" value="Genomic_DNA"/>
</dbReference>
<dbReference type="RefSeq" id="WP_010081421.1">
    <property type="nucleotide sequence ID" value="NC_010816.1"/>
</dbReference>
<dbReference type="SMR" id="B3DR08"/>
<dbReference type="KEGG" id="blj:BLD_1846"/>
<dbReference type="HOGENOM" id="CLU_018869_1_0_11"/>
<dbReference type="Proteomes" id="UP000002419">
    <property type="component" value="Chromosome"/>
</dbReference>
<dbReference type="GO" id="GO:0005737">
    <property type="term" value="C:cytoplasm"/>
    <property type="evidence" value="ECO:0007669"/>
    <property type="project" value="UniProtKB-SubCell"/>
</dbReference>
<dbReference type="GO" id="GO:0005524">
    <property type="term" value="F:ATP binding"/>
    <property type="evidence" value="ECO:0007669"/>
    <property type="project" value="UniProtKB-UniRule"/>
</dbReference>
<dbReference type="GO" id="GO:0032267">
    <property type="term" value="F:tRNA(Ile)-lysidine synthase activity"/>
    <property type="evidence" value="ECO:0007669"/>
    <property type="project" value="UniProtKB-EC"/>
</dbReference>
<dbReference type="GO" id="GO:0006400">
    <property type="term" value="P:tRNA modification"/>
    <property type="evidence" value="ECO:0007669"/>
    <property type="project" value="UniProtKB-UniRule"/>
</dbReference>
<dbReference type="CDD" id="cd01992">
    <property type="entry name" value="TilS_N"/>
    <property type="match status" value="1"/>
</dbReference>
<dbReference type="Gene3D" id="3.40.50.620">
    <property type="entry name" value="HUPs"/>
    <property type="match status" value="1"/>
</dbReference>
<dbReference type="HAMAP" id="MF_01161">
    <property type="entry name" value="tRNA_Ile_lys_synt"/>
    <property type="match status" value="1"/>
</dbReference>
<dbReference type="InterPro" id="IPR014729">
    <property type="entry name" value="Rossmann-like_a/b/a_fold"/>
</dbReference>
<dbReference type="InterPro" id="IPR011063">
    <property type="entry name" value="TilS/TtcA_N"/>
</dbReference>
<dbReference type="InterPro" id="IPR012094">
    <property type="entry name" value="tRNA_Ile_lys_synt"/>
</dbReference>
<dbReference type="InterPro" id="IPR012795">
    <property type="entry name" value="tRNA_Ile_lys_synt_N"/>
</dbReference>
<dbReference type="InterPro" id="IPR015262">
    <property type="entry name" value="tRNA_Ile_lys_synt_subst-bd"/>
</dbReference>
<dbReference type="NCBIfam" id="TIGR02432">
    <property type="entry name" value="lysidine_TilS_N"/>
    <property type="match status" value="1"/>
</dbReference>
<dbReference type="PANTHER" id="PTHR43033">
    <property type="entry name" value="TRNA(ILE)-LYSIDINE SYNTHASE-RELATED"/>
    <property type="match status" value="1"/>
</dbReference>
<dbReference type="PANTHER" id="PTHR43033:SF1">
    <property type="entry name" value="TRNA(ILE)-LYSIDINE SYNTHASE-RELATED"/>
    <property type="match status" value="1"/>
</dbReference>
<dbReference type="Pfam" id="PF01171">
    <property type="entry name" value="ATP_bind_3"/>
    <property type="match status" value="1"/>
</dbReference>
<dbReference type="Pfam" id="PF09179">
    <property type="entry name" value="TilS"/>
    <property type="match status" value="1"/>
</dbReference>
<dbReference type="SUPFAM" id="SSF52402">
    <property type="entry name" value="Adenine nucleotide alpha hydrolases-like"/>
    <property type="match status" value="1"/>
</dbReference>
<dbReference type="SUPFAM" id="SSF82829">
    <property type="entry name" value="MesJ substrate recognition domain-like"/>
    <property type="match status" value="1"/>
</dbReference>
<keyword id="KW-0067">ATP-binding</keyword>
<keyword id="KW-0963">Cytoplasm</keyword>
<keyword id="KW-0436">Ligase</keyword>
<keyword id="KW-0547">Nucleotide-binding</keyword>
<keyword id="KW-0819">tRNA processing</keyword>
<protein>
    <recommendedName>
        <fullName evidence="1">tRNA(Ile)-lysidine synthase</fullName>
        <ecNumber evidence="1">6.3.4.19</ecNumber>
    </recommendedName>
    <alternativeName>
        <fullName evidence="1">tRNA(Ile)-2-lysyl-cytidine synthase</fullName>
    </alternativeName>
    <alternativeName>
        <fullName evidence="1">tRNA(Ile)-lysidine synthetase</fullName>
    </alternativeName>
</protein>
<gene>
    <name evidence="1" type="primary">tilS</name>
    <name type="ordered locus">BLD_1846</name>
</gene>
<sequence>MAYSARLRKAVGAVRTTLSAVELCDVQAPEFAQHGDHAVASDAPLVLVACSGGRDSMALAAVSHIVCTSMGVRCGVVIVDHGLQEGSEQVAGEAANRCRALGLGPVIVRNATVQARGEGLEAAARQARYNELCAAARESGAIAVLLAHTMDDQAETVLIGLLRSRGVDALAGMPQVFTRSGVTFARPLLTLTRAETTGICEDLGVEYWDDPTNGDAVDGELPNDYPLRSRVRHDLLPAIERFAGFNVTRHFAESARLARMDKEYLDQRSDEVMGEAVTTVDWPASSAAVSTDTPRACAAGDTNDSSHGVGLMISVRRIAREPEAIRLRVIAHALSQAGVNASAAQIAAIDRLVVDWHGQGGVSLPRGYSANRKKHVIRVCQDGAHANR</sequence>
<comment type="function">
    <text evidence="1">Ligates lysine onto the cytidine present at position 34 of the AUA codon-specific tRNA(Ile) that contains the anticodon CAU, in an ATP-dependent manner. Cytidine is converted to lysidine, thus changing the amino acid specificity of the tRNA from methionine to isoleucine.</text>
</comment>
<comment type="catalytic activity">
    <reaction evidence="1">
        <text>cytidine(34) in tRNA(Ile2) + L-lysine + ATP = lysidine(34) in tRNA(Ile2) + AMP + diphosphate + H(+)</text>
        <dbReference type="Rhea" id="RHEA:43744"/>
        <dbReference type="Rhea" id="RHEA-COMP:10625"/>
        <dbReference type="Rhea" id="RHEA-COMP:10670"/>
        <dbReference type="ChEBI" id="CHEBI:15378"/>
        <dbReference type="ChEBI" id="CHEBI:30616"/>
        <dbReference type="ChEBI" id="CHEBI:32551"/>
        <dbReference type="ChEBI" id="CHEBI:33019"/>
        <dbReference type="ChEBI" id="CHEBI:82748"/>
        <dbReference type="ChEBI" id="CHEBI:83665"/>
        <dbReference type="ChEBI" id="CHEBI:456215"/>
        <dbReference type="EC" id="6.3.4.19"/>
    </reaction>
</comment>
<comment type="subcellular location">
    <subcellularLocation>
        <location evidence="1">Cytoplasm</location>
    </subcellularLocation>
</comment>
<comment type="domain">
    <text>The N-terminal region contains the highly conserved SGGXDS motif, predicted to be a P-loop motif involved in ATP binding.</text>
</comment>
<comment type="similarity">
    <text evidence="1">Belongs to the tRNA(Ile)-lysidine synthase family.</text>
</comment>
<proteinExistence type="inferred from homology"/>